<gene>
    <name type="primary">Copb1</name>
    <name type="synonym">Copb</name>
</gene>
<accession>P23514</accession>
<organism>
    <name type="scientific">Rattus norvegicus</name>
    <name type="common">Rat</name>
    <dbReference type="NCBI Taxonomy" id="10116"/>
    <lineage>
        <taxon>Eukaryota</taxon>
        <taxon>Metazoa</taxon>
        <taxon>Chordata</taxon>
        <taxon>Craniata</taxon>
        <taxon>Vertebrata</taxon>
        <taxon>Euteleostomi</taxon>
        <taxon>Mammalia</taxon>
        <taxon>Eutheria</taxon>
        <taxon>Euarchontoglires</taxon>
        <taxon>Glires</taxon>
        <taxon>Rodentia</taxon>
        <taxon>Myomorpha</taxon>
        <taxon>Muroidea</taxon>
        <taxon>Muridae</taxon>
        <taxon>Murinae</taxon>
        <taxon>Rattus</taxon>
    </lineage>
</organism>
<dbReference type="EMBL" id="X57228">
    <property type="protein sequence ID" value="CAA40505.1"/>
    <property type="molecule type" value="mRNA"/>
</dbReference>
<dbReference type="EMBL" id="BC061882">
    <property type="protein sequence ID" value="AAH61882.1"/>
    <property type="molecule type" value="mRNA"/>
</dbReference>
<dbReference type="PIR" id="S13520">
    <property type="entry name" value="S13520"/>
</dbReference>
<dbReference type="RefSeq" id="NP_542959.1">
    <property type="nucleotide sequence ID" value="NM_080781.2"/>
</dbReference>
<dbReference type="RefSeq" id="XP_008757882.1">
    <property type="nucleotide sequence ID" value="XM_008759660.3"/>
</dbReference>
<dbReference type="RefSeq" id="XP_008757883.1">
    <property type="nucleotide sequence ID" value="XM_008759661.4"/>
</dbReference>
<dbReference type="SMR" id="P23514"/>
<dbReference type="BioGRID" id="250261">
    <property type="interactions" value="5"/>
</dbReference>
<dbReference type="FunCoup" id="P23514">
    <property type="interactions" value="3679"/>
</dbReference>
<dbReference type="IntAct" id="P23514">
    <property type="interactions" value="7"/>
</dbReference>
<dbReference type="STRING" id="10116.ENSRNOP00000072797"/>
<dbReference type="PhosphoSitePlus" id="P23514"/>
<dbReference type="jPOST" id="P23514"/>
<dbReference type="PaxDb" id="10116-ENSRNOP00000016292"/>
<dbReference type="Ensembl" id="ENSRNOT00000083293.2">
    <property type="protein sequence ID" value="ENSRNOP00000072797.1"/>
    <property type="gene ID" value="ENSRNOG00000057623.2"/>
</dbReference>
<dbReference type="GeneID" id="114023"/>
<dbReference type="KEGG" id="rno:114023"/>
<dbReference type="UCSC" id="RGD:620861">
    <property type="organism name" value="rat"/>
</dbReference>
<dbReference type="AGR" id="RGD:620861"/>
<dbReference type="CTD" id="1315"/>
<dbReference type="RGD" id="620861">
    <property type="gene designation" value="Copb1"/>
</dbReference>
<dbReference type="eggNOG" id="KOG1058">
    <property type="taxonomic scope" value="Eukaryota"/>
</dbReference>
<dbReference type="GeneTree" id="ENSGT00390000005270"/>
<dbReference type="HOGENOM" id="CLU_006949_0_0_1"/>
<dbReference type="InParanoid" id="P23514"/>
<dbReference type="OMA" id="IYKNFDW"/>
<dbReference type="OrthoDB" id="10261439at2759"/>
<dbReference type="PhylomeDB" id="P23514"/>
<dbReference type="TreeFam" id="TF105737"/>
<dbReference type="Reactome" id="R-RNO-6798695">
    <property type="pathway name" value="Neutrophil degranulation"/>
</dbReference>
<dbReference type="Reactome" id="R-RNO-6807878">
    <property type="pathway name" value="COPI-mediated anterograde transport"/>
</dbReference>
<dbReference type="Reactome" id="R-RNO-6811434">
    <property type="pathway name" value="COPI-dependent Golgi-to-ER retrograde traffic"/>
</dbReference>
<dbReference type="PRO" id="PR:P23514"/>
<dbReference type="Proteomes" id="UP000002494">
    <property type="component" value="Chromosome 1"/>
</dbReference>
<dbReference type="Bgee" id="ENSRNOG00000057623">
    <property type="expression patterns" value="Expressed in jejunum and 20 other cell types or tissues"/>
</dbReference>
<dbReference type="GO" id="GO:0030126">
    <property type="term" value="C:COPI vesicle coat"/>
    <property type="evidence" value="ECO:0000314"/>
    <property type="project" value="UniProtKB"/>
</dbReference>
<dbReference type="GO" id="GO:0030137">
    <property type="term" value="C:COPI-coated vesicle"/>
    <property type="evidence" value="ECO:0000266"/>
    <property type="project" value="RGD"/>
</dbReference>
<dbReference type="GO" id="GO:0005829">
    <property type="term" value="C:cytosol"/>
    <property type="evidence" value="ECO:0007669"/>
    <property type="project" value="Ensembl"/>
</dbReference>
<dbReference type="GO" id="GO:0005783">
    <property type="term" value="C:endoplasmic reticulum"/>
    <property type="evidence" value="ECO:0007669"/>
    <property type="project" value="UniProtKB-KW"/>
</dbReference>
<dbReference type="GO" id="GO:0005793">
    <property type="term" value="C:endoplasmic reticulum-Golgi intermediate compartment"/>
    <property type="evidence" value="ECO:0007669"/>
    <property type="project" value="UniProtKB-SubCell"/>
</dbReference>
<dbReference type="GO" id="GO:0005794">
    <property type="term" value="C:Golgi apparatus"/>
    <property type="evidence" value="ECO:0000314"/>
    <property type="project" value="MGI"/>
</dbReference>
<dbReference type="GO" id="GO:0000139">
    <property type="term" value="C:Golgi membrane"/>
    <property type="evidence" value="ECO:0007669"/>
    <property type="project" value="UniProtKB-SubCell"/>
</dbReference>
<dbReference type="GO" id="GO:0005798">
    <property type="term" value="C:Golgi-associated vesicle"/>
    <property type="evidence" value="ECO:0000314"/>
    <property type="project" value="RGD"/>
</dbReference>
<dbReference type="GO" id="GO:0005886">
    <property type="term" value="C:plasma membrane"/>
    <property type="evidence" value="ECO:0007669"/>
    <property type="project" value="UniProtKB-SubCell"/>
</dbReference>
<dbReference type="GO" id="GO:0005198">
    <property type="term" value="F:structural molecule activity"/>
    <property type="evidence" value="ECO:0007669"/>
    <property type="project" value="InterPro"/>
</dbReference>
<dbReference type="GO" id="GO:0006888">
    <property type="term" value="P:endoplasmic reticulum to Golgi vesicle-mediated transport"/>
    <property type="evidence" value="ECO:0000318"/>
    <property type="project" value="GO_Central"/>
</dbReference>
<dbReference type="GO" id="GO:0006891">
    <property type="term" value="P:intra-Golgi vesicle-mediated transport"/>
    <property type="evidence" value="ECO:0000314"/>
    <property type="project" value="UniProtKB"/>
</dbReference>
<dbReference type="GO" id="GO:0006886">
    <property type="term" value="P:intracellular protein transport"/>
    <property type="evidence" value="ECO:0007669"/>
    <property type="project" value="InterPro"/>
</dbReference>
<dbReference type="GO" id="GO:0006890">
    <property type="term" value="P:retrograde vesicle-mediated transport, Golgi to endoplasmic reticulum"/>
    <property type="evidence" value="ECO:0000304"/>
    <property type="project" value="UniProtKB"/>
</dbReference>
<dbReference type="Gene3D" id="1.25.10.10">
    <property type="entry name" value="Leucine-rich Repeat Variant"/>
    <property type="match status" value="1"/>
</dbReference>
<dbReference type="InterPro" id="IPR011989">
    <property type="entry name" value="ARM-like"/>
</dbReference>
<dbReference type="InterPro" id="IPR016024">
    <property type="entry name" value="ARM-type_fold"/>
</dbReference>
<dbReference type="InterPro" id="IPR002553">
    <property type="entry name" value="Clathrin/coatomer_adapt-like_N"/>
</dbReference>
<dbReference type="InterPro" id="IPR011710">
    <property type="entry name" value="Coatomer_bsu_C"/>
</dbReference>
<dbReference type="InterPro" id="IPR016460">
    <property type="entry name" value="COPB1"/>
</dbReference>
<dbReference type="InterPro" id="IPR029446">
    <property type="entry name" value="COPB1_appendage_platform_dom"/>
</dbReference>
<dbReference type="PANTHER" id="PTHR10635">
    <property type="entry name" value="COATOMER SUBUNIT BETA"/>
    <property type="match status" value="1"/>
</dbReference>
<dbReference type="PANTHER" id="PTHR10635:SF0">
    <property type="entry name" value="COATOMER SUBUNIT BETA"/>
    <property type="match status" value="1"/>
</dbReference>
<dbReference type="Pfam" id="PF01602">
    <property type="entry name" value="Adaptin_N"/>
    <property type="match status" value="1"/>
</dbReference>
<dbReference type="Pfam" id="PF07718">
    <property type="entry name" value="Coatamer_beta_C"/>
    <property type="match status" value="1"/>
</dbReference>
<dbReference type="Pfam" id="PF14806">
    <property type="entry name" value="Coatomer_b_Cpla"/>
    <property type="match status" value="1"/>
</dbReference>
<dbReference type="PIRSF" id="PIRSF005727">
    <property type="entry name" value="Coatomer_beta_subunit"/>
    <property type="match status" value="1"/>
</dbReference>
<dbReference type="SUPFAM" id="SSF48371">
    <property type="entry name" value="ARM repeat"/>
    <property type="match status" value="1"/>
</dbReference>
<name>COPB_RAT</name>
<sequence>MTAAENVCYTLINVPMDSEPPSEISLKNDLEKGDVKSKTEALKKVIIMILNGEKLPGLLMTIIRFVLPLQDHTIKKLLLVFWEIVPKTTPDGRLLHEMILVCDAYRKDLQHPNEFIRGSTLRFLCKLKEAELLEPLMPAIRACLEHRHSYVRRNAVLAIYTIYRNFENLIPDAPELIHDFLVNEKDASCKRNAFMMLIHADQDRALDYLSTCIDQVQTFGDILQLVIVELIYKVCHANPSERARFIRCIYNLLQSSSPAVKYEAAGTLVTLSSAPTAIKAAAQCYIDLIIKESDNNVKLIVLDRLVELKEHPAHERVLQDLVMDILRVLSTPDLEVRKKTLQLALDLVSSRNVEELVIVLKKEVIKTNNVSEHEDTDKYRQLLVRTLHSCSVRFPDMAANVIPVLMEFLSDSNEAAAADVLEFVREAIQRFDNLRMLIVEKMLEVFHAIKSVKIYRGALWILGEYCSTKEDIQSVMTEVRRSLGEIPIVESEIKKEAGELKPEEEITVGPVQKLVTEMGTYATQSALSSSRPTKKEEDRPPLRGFLLDGDFFVAASLATTLTKIALRYVALVQEKKKQNSFVAEAMLLMATILHLGKSSLPKKPITDDDVDRISLCLKVLSECSPLMNDIFNKECRQSLSQMLSAKLEEEKLSQKKESEKRNVTVQPDDPISFMQLTAKNEMNCKEDQFQLSLLAAMGNTQRKEAADPLASKLNKVTQLTGFSDPVYAEAYVHVNQYDIVLDVLVVNQTSDTLQNCTLELATLGDLKLVEKPSPLTLAPHDFANIKANVKVASTENGIIFGNIVYDVSGAASDRNCVVLSDIHIDIMDYIQPATCTDAEFRQMWAEFEWENKVTVNTNVTDLNDYLQHILKSTNMKCLTPEKALSGYCGFMAANLYARSIFGEDALANVSIEKPVHQGPDAAVTGHIRIRAKSQGMALSLGDKINLSQKKTSL</sequence>
<comment type="function">
    <text evidence="8 10 11 13">The coatomer is a cytosolic protein complex that binds to dilysine motifs and reversibly associates with Golgi non-clathrin-coated vesicles, which further mediate biosynthetic protein transport from the ER, via the Golgi up to the trans Golgi network. Coatomer complex is required for budding from Golgi membranes, and is essential for the retrograde Golgi-to-ER transport of dilysine-tagged proteins. In mammals, the coatomer can only be recruited by membranes associated to ADP-ribosylation factors (ARFs), which are small GTP-binding proteins; the complex also influences the Golgi structural integrity, as well as the processing, activity, and endocytic recycling of LDL receptors. Involved in the Golgi disassembly and reassembly processes during cell cycle. Involved in autophagy by playing a role in early endosome function. Plays a role in organellar compartmentalization of secretory compartments including endoplasmic reticulum (ER)-Golgi intermediate compartment (ERGIC), Golgi, trans-Golgi network (TGN) and recycling endosomes, and in biosynthetic transport of CAV1. Plays a functional role in facilitating the transport of kappa-type opioid receptor mRNAs into axons and enhances translation of these proteins in the axonal compartment of dorsal root ganglion (DRG) cells. Required for limiting lipid storage in lipid droplets. Involved in lipid homeostasis by regulating the presence of perilipin family members PLIN2 and PLIN3 at the lipid droplet surface and promoting the association of adipocyte triglyceride lipase (PNPLA2) with the lipid droplet surface to mediate lipolysis.</text>
</comment>
<comment type="subunit">
    <text evidence="2 3 9 12 13 16">Oligomeric complex that consists of at least the alpha, beta, beta', gamma, delta, epsilon and zeta subunits. Interacts with SCYL1. Interacts with CAPN8 (By similarity). Interacts with COPG1 (By similarity). Interacts with ARF1 (myristoylated); this interaction is required for binding of COPB1 to Golgi membranes (By similarity). Interacts (via trunk domain) with ARF1 (via switch I region); the interaction is direct (By similarity). Interacts with KCNK2 (via N-terminus); this interaction increases the channel-mediated whole cell currents and promotes plasma membrane expression of KCNK2 (By similarity). Interacts with PRKCE. Interacts with STX17. Interacts with TMEM115 (By similarity). Interacts with TMEM41B (By similarity).</text>
</comment>
<comment type="interaction">
    <interactant intactId="EBI-620488">
        <id>P23514</id>
    </interactant>
    <interactant intactId="EBI-620432">
        <id>P53619</id>
        <label>ARCN1</label>
    </interactant>
    <organismsDiffer>true</organismsDiffer>
    <experiments>3</experiments>
</comment>
<comment type="subcellular location">
    <subcellularLocation>
        <location evidence="13 14">Cytoplasm</location>
    </subcellularLocation>
    <subcellularLocation>
        <location evidence="4 5 6 10 11 13 14">Golgi apparatus membrane</location>
        <topology evidence="2">Peripheral membrane protein</topology>
        <orientation evidence="17">Cytoplasmic side</orientation>
    </subcellularLocation>
    <subcellularLocation>
        <location evidence="4 7 14">Cytoplasmic vesicle</location>
        <location evidence="4 7 14">COPI-coated vesicle membrane</location>
        <topology>Peripheral membrane protein</topology>
        <orientation evidence="17">Cytoplasmic side</orientation>
    </subcellularLocation>
    <subcellularLocation>
        <location evidence="2">Cell membrane</location>
    </subcellularLocation>
    <subcellularLocation>
        <location evidence="3">Endoplasmic reticulum-Golgi intermediate compartment</location>
    </subcellularLocation>
    <subcellularLocation>
        <location evidence="15">Microsome membrane</location>
    </subcellularLocation>
    <text evidence="3 14 15">The coatomer is cytoplasmic or polymerized on the cytoplasmic side of the Golgi, as well as on the vesicles/buds originating from it (PubMed:8458872). Proteolytic cleavage by CAPN8 triggers translocation from Golgi to cytoplasm (By similarity). Found in perinuclear vesicular-tubular clusters (VTCs) and in the Golgi region where associated with vesicles, buds and rims of the Golgi stack (PubMed:8458872). Occasionally present at the trans-side of Golgi, but mainly present at the cis-Golgi side in transitional areas (TA), on so-called peripheral elements (PE) consisting of tubules and vesicles located between the cup-shaped transitional elements (TE) of the rough endoplasmic reticulum (RER) and the cis-most Golgi cisternae (PubMed:8458872). Present in cytoplasm, not associated with visible coats or membranes, with a minor fraction present on small clusters of tubules and vesicles (PubMed:8458872). Some association with high-density and low-density microsomes and mitochondria/nuclei fraction (PubMed:9165027). Very little found in plasma membrane fraction (PubMed:9165027).</text>
</comment>
<comment type="PTM">
    <text evidence="1">Proteolytically cleaved between Ser-528 and Ser-529 by CAPN8.</text>
</comment>
<comment type="miscellaneous">
    <text>Brefeldin A induces dissociation from the Golgi of the beta-COP and presumably the other coatomer subunits.</text>
</comment>
<keyword id="KW-0007">Acetylation</keyword>
<keyword id="KW-1003">Cell membrane</keyword>
<keyword id="KW-0963">Cytoplasm</keyword>
<keyword id="KW-0968">Cytoplasmic vesicle</keyword>
<keyword id="KW-0903">Direct protein sequencing</keyword>
<keyword id="KW-0256">Endoplasmic reticulum</keyword>
<keyword id="KW-0931">ER-Golgi transport</keyword>
<keyword id="KW-0333">Golgi apparatus</keyword>
<keyword id="KW-0472">Membrane</keyword>
<keyword id="KW-0492">Microsome</keyword>
<keyword id="KW-0653">Protein transport</keyword>
<keyword id="KW-1185">Reference proteome</keyword>
<keyword id="KW-0677">Repeat</keyword>
<keyword id="KW-0813">Transport</keyword>
<reference key="1">
    <citation type="journal article" date="1991" name="Cell">
        <title>Beta-COP, a 110 kd protein associated with non-clathrin-coated vesicles and the Golgi complex, shows homology to beta-adaptin.</title>
        <authorList>
            <person name="Duden R."/>
            <person name="Griffiths G."/>
            <person name="Frank R."/>
            <person name="Argos P."/>
            <person name="Kreis T.E."/>
        </authorList>
    </citation>
    <scope>NUCLEOTIDE SEQUENCE [MRNA]</scope>
    <scope>PROTEIN SEQUENCE OF 108-117; 262-276; 328-337; 496-527; 568-575; 768-786 AND 853-967</scope>
    <scope>SUBCELLULAR LOCATION</scope>
    <source>
        <strain>Sprague-Dawley</strain>
        <tissue>Liver</tissue>
    </source>
</reference>
<reference key="2">
    <citation type="journal article" date="2004" name="Genome Res.">
        <title>The status, quality, and expansion of the NIH full-length cDNA project: the Mammalian Gene Collection (MGC).</title>
        <authorList>
            <consortium name="The MGC Project Team"/>
        </authorList>
    </citation>
    <scope>NUCLEOTIDE SEQUENCE [LARGE SCALE MRNA]</scope>
    <source>
        <tissue>Prostate</tissue>
    </source>
</reference>
<reference key="3">
    <citation type="journal article" date="1991" name="Science">
        <title>Binding of ARF and beta-COP to Golgi membranes: possible regulation by a trimeric G protein.</title>
        <authorList>
            <person name="Donaldson J.G."/>
            <person name="Kahn R.A."/>
            <person name="Lippincott-Schwartz J."/>
            <person name="Klausner R.D."/>
        </authorList>
    </citation>
    <scope>FUNCTION</scope>
    <scope>SUBCELLULAR LOCATION</scope>
</reference>
<reference key="4">
    <citation type="journal article" date="1993" name="J. Cell Biol.">
        <title>Beta-COP localizes mainly to the cis-Golgi side in exocrine pancreas.</title>
        <authorList>
            <person name="Oprins A."/>
            <person name="Duden R."/>
            <person name="Kreis T.E."/>
            <person name="Geuze H.J."/>
            <person name="Slot J.W."/>
        </authorList>
    </citation>
    <scope>SUBCELLULAR LOCATION</scope>
</reference>
<reference key="5">
    <citation type="journal article" date="1993" name="J. Cell Biol.">
        <title>Beta-COP is essential for transport of protein from the endoplasmic reticulum to the Golgi in vitro.</title>
        <authorList>
            <person name="Peter F."/>
            <person name="Plutner H."/>
            <person name="Zhu H."/>
            <person name="Kreis T.E."/>
            <person name="Balch W.E."/>
        </authorList>
    </citation>
    <scope>FUNCTION</scope>
    <scope>SUBUNIT</scope>
    <scope>SUBCELLULAR LOCATION</scope>
</reference>
<reference key="6">
    <citation type="journal article" date="1997" name="Endocrinology">
        <title>Association of N-ethylmaleimide sensitive fusion (NSF) protein and soluble NSF attachment proteins-alpha and -gamma with glucose transporter-4-containing vesicles in primary rat adipocytes.</title>
        <authorList>
            <person name="Mastick C.C."/>
            <person name="Falick A.L."/>
        </authorList>
    </citation>
    <scope>SUBCELLULAR LOCATION</scope>
</reference>
<reference key="7">
    <citation type="journal article" date="1997" name="J. Biol. Chem.">
        <title>The coatomer protein beta'-COP, a selective binding protein (RACK) for protein kinase Cepsilon.</title>
        <authorList>
            <person name="Csukai M."/>
            <person name="Chen C.-H."/>
            <person name="de Matteis M.A."/>
            <person name="Mochly-Rosen D."/>
        </authorList>
    </citation>
    <scope>INTERACTION WITH PRKCE</scope>
</reference>
<reference key="8">
    <citation type="journal article" date="1999" name="J. Cell Biol.">
        <title>GBF1. A novel Golgi-associated bfa-resistant guanine nucleotide exchange factor that displays specificity for ADP-ribosylation factor 5.</title>
        <authorList>
            <person name="Claude A."/>
            <person name="Zhao B.-P."/>
            <person name="Kuziemsky C.E."/>
            <person name="Dahan S."/>
            <person name="Berger S.J."/>
            <person name="Yan J.-P."/>
            <person name="Armold A.D."/>
            <person name="Sullivan E.M."/>
            <person name="Melancon P."/>
        </authorList>
    </citation>
    <scope>SUBCELLULAR LOCATION</scope>
</reference>
<reference key="9">
    <citation type="journal article" date="1999" name="Mol. Biol. Cell">
        <title>A Rab2 mutant with impaired GTPase activity stimulates vesicle formation from pre-Golgi intermediates.</title>
        <authorList>
            <person name="Tisdale E.J."/>
        </authorList>
    </citation>
    <scope>SUBCELLULAR LOCATION</scope>
</reference>
<reference key="10">
    <citation type="journal article" date="2002" name="J. Histochem. Cytochem.">
        <title>Structural integrity of the Golgi stack is essential for normal secretory functions of rat parotid acinar cells: effects of brefeldin A and okadaic acid.</title>
        <authorList>
            <person name="Tamaki H."/>
            <person name="Yamashina S."/>
        </authorList>
    </citation>
    <scope>SUBCELLULAR LOCATION</scope>
</reference>
<reference key="11">
    <citation type="journal article" date="2005" name="J. Biol. Chem.">
        <title>Identification and characterization of GIV, a novel Galpha i/s-interacting protein found on COPI, endoplasmic reticulum-Golgi transport vesicles.</title>
        <authorList>
            <person name="Le-Niculescu H."/>
            <person name="Niesman I."/>
            <person name="Fischer T."/>
            <person name="DeVries L."/>
            <person name="Farquhar M.G."/>
        </authorList>
    </citation>
    <scope>SUBCELLULAR LOCATION</scope>
</reference>
<reference key="12">
    <citation type="journal article" date="2007" name="Proc. Natl. Acad. Sci. U.S.A.">
        <title>Copb1-facilitated axonal transport and translation of kappa opioid-receptor mRNA.</title>
        <authorList>
            <person name="Bi J."/>
            <person name="Tsai N.P."/>
            <person name="Lu H.Y."/>
            <person name="Loh H.H."/>
            <person name="Wei L.N."/>
        </authorList>
    </citation>
    <scope>FUNCTION</scope>
</reference>
<reference key="13">
    <citation type="journal article" date="2008" name="J. Biol. Chem.">
        <title>Scyl1, mutated in a recessive form of spinocerebellar neurodegeneration, regulates COPI-mediated retrograde traffic.</title>
        <authorList>
            <person name="Burman J.L."/>
            <person name="Bourbonniere L."/>
            <person name="Philie J."/>
            <person name="Stroh T."/>
            <person name="Dejgaard S.Y."/>
            <person name="Presley J.F."/>
            <person name="McPherson P.S."/>
        </authorList>
    </citation>
    <scope>INTERACTION WITH SCYL1</scope>
</reference>
<reference key="14">
    <citation type="journal article" date="2010" name="J. Biol. Chem.">
        <title>Quantitative proteomics analysis of cell cycle-regulated Golgi disassembly and reassembly.</title>
        <authorList>
            <person name="Chen X."/>
            <person name="Simon E.S."/>
            <person name="Xiang Y."/>
            <person name="Kachman M."/>
            <person name="Andrews P.C."/>
            <person name="Wang Y."/>
        </authorList>
    </citation>
    <scope>FUNCTION</scope>
    <scope>SUBCELLULAR LOCATION</scope>
    <scope>IDENTIFICATION BY MASS SPECTROMETRY</scope>
</reference>
<reference key="15">
    <citation type="journal article" date="2011" name="Biol. Cell">
        <title>Syntaxin 17 cycles between the ER and ERGIC and is required to maintain the architecture of ERGIC and Golgi.</title>
        <authorList>
            <person name="Muppirala M."/>
            <person name="Gupta V."/>
            <person name="Swarup G."/>
        </authorList>
    </citation>
    <scope>INTERACTION WITH STX17</scope>
</reference>
<proteinExistence type="evidence at protein level"/>
<evidence type="ECO:0000250" key="1"/>
<evidence type="ECO:0000250" key="2">
    <source>
        <dbReference type="UniProtKB" id="P53618"/>
    </source>
</evidence>
<evidence type="ECO:0000250" key="3">
    <source>
        <dbReference type="UniProtKB" id="Q9JIF7"/>
    </source>
</evidence>
<evidence type="ECO:0000269" key="4">
    <source>
    </source>
</evidence>
<evidence type="ECO:0000269" key="5">
    <source>
    </source>
</evidence>
<evidence type="ECO:0000269" key="6">
    <source>
    </source>
</evidence>
<evidence type="ECO:0000269" key="7">
    <source>
    </source>
</evidence>
<evidence type="ECO:0000269" key="8">
    <source>
    </source>
</evidence>
<evidence type="ECO:0000269" key="9">
    <source>
    </source>
</evidence>
<evidence type="ECO:0000269" key="10">
    <source>
    </source>
</evidence>
<evidence type="ECO:0000269" key="11">
    <source>
    </source>
</evidence>
<evidence type="ECO:0000269" key="12">
    <source>
    </source>
</evidence>
<evidence type="ECO:0000269" key="13">
    <source>
    </source>
</evidence>
<evidence type="ECO:0000269" key="14">
    <source>
    </source>
</evidence>
<evidence type="ECO:0000269" key="15">
    <source>
    </source>
</evidence>
<evidence type="ECO:0000269" key="16">
    <source>
    </source>
</evidence>
<evidence type="ECO:0000305" key="17"/>
<feature type="initiator methionine" description="Removed" evidence="2">
    <location>
        <position position="1"/>
    </location>
</feature>
<feature type="chain" id="PRO_0000193835" description="Coatomer subunit beta">
    <location>
        <begin position="2"/>
        <end position="953"/>
    </location>
</feature>
<feature type="repeat" description="HEAT 1">
    <location>
        <begin position="96"/>
        <end position="131"/>
    </location>
</feature>
<feature type="repeat" description="HEAT 2">
    <location>
        <begin position="132"/>
        <end position="168"/>
    </location>
</feature>
<feature type="repeat" description="HEAT 3">
    <location>
        <begin position="240"/>
        <end position="276"/>
    </location>
</feature>
<feature type="repeat" description="HEAT 4">
    <location>
        <begin position="277"/>
        <end position="314"/>
    </location>
</feature>
<feature type="repeat" description="HEAT 5">
    <location>
        <begin position="316"/>
        <end position="353"/>
    </location>
</feature>
<feature type="repeat" description="HEAT 6">
    <location>
        <begin position="396"/>
        <end position="433"/>
    </location>
</feature>
<feature type="modified residue" description="N-acetylthreonine" evidence="2">
    <location>
        <position position="2"/>
    </location>
</feature>
<feature type="modified residue" description="N6-acetyllysine" evidence="3">
    <location>
        <position position="494"/>
    </location>
</feature>
<protein>
    <recommendedName>
        <fullName>Coatomer subunit beta</fullName>
    </recommendedName>
    <alternativeName>
        <fullName>Beta-coat protein</fullName>
        <shortName>Beta-COP</shortName>
    </alternativeName>
</protein>